<organism>
    <name type="scientific">Staphylococcus aureus (strain COL)</name>
    <dbReference type="NCBI Taxonomy" id="93062"/>
    <lineage>
        <taxon>Bacteria</taxon>
        <taxon>Bacillati</taxon>
        <taxon>Bacillota</taxon>
        <taxon>Bacilli</taxon>
        <taxon>Bacillales</taxon>
        <taxon>Staphylococcaceae</taxon>
        <taxon>Staphylococcus</taxon>
    </lineage>
</organism>
<keyword id="KW-0378">Hydrolase</keyword>
<keyword id="KW-0645">Protease</keyword>
<keyword id="KW-0964">Secreted</keyword>
<keyword id="KW-0720">Serine protease</keyword>
<keyword id="KW-0732">Signal</keyword>
<evidence type="ECO:0000250" key="1"/>
<evidence type="ECO:0000255" key="2"/>
<evidence type="ECO:0000305" key="3"/>
<sequence>MNKNIIIKSIAALTILTSVTGVGTTVVEGIQQTAKAEHNVKLIKNTNVAPYNGVVSIGSGTGFIVGKNTIVTNKHVVAGMEIGAHIIAHPNGEYNNGGFYKVKKIVRYSGQEDIAILHVEDKAVHPKNRNFKDYTGILKIASEAKENERISIVGYPEPYINKFQMYESTGKVLSVKGNMIITDAFVEPGNSGSAVFNSKYEVVGVHFGGNGPGNKSTKGYGVYFSPEIKKFIADNTDK</sequence>
<feature type="signal peptide" evidence="2">
    <location>
        <begin position="1"/>
        <end position="36"/>
    </location>
</feature>
<feature type="chain" id="PRO_0000359573" description="Serine protease SplE">
    <location>
        <begin position="37"/>
        <end position="238"/>
    </location>
</feature>
<feature type="active site" description="Charge relay system" evidence="1">
    <location>
        <position position="75"/>
    </location>
</feature>
<feature type="active site" description="Charge relay system" evidence="1">
    <location>
        <position position="113"/>
    </location>
</feature>
<feature type="active site" description="Charge relay system" evidence="1">
    <location>
        <position position="191"/>
    </location>
</feature>
<proteinExistence type="inferred from homology"/>
<reference key="1">
    <citation type="journal article" date="2005" name="J. Bacteriol.">
        <title>Insights on evolution of virulence and resistance from the complete genome analysis of an early methicillin-resistant Staphylococcus aureus strain and a biofilm-producing methicillin-resistant Staphylococcus epidermidis strain.</title>
        <authorList>
            <person name="Gill S.R."/>
            <person name="Fouts D.E."/>
            <person name="Archer G.L."/>
            <person name="Mongodin E.F."/>
            <person name="DeBoy R.T."/>
            <person name="Ravel J."/>
            <person name="Paulsen I.T."/>
            <person name="Kolonay J.F."/>
            <person name="Brinkac L.M."/>
            <person name="Beanan M.J."/>
            <person name="Dodson R.J."/>
            <person name="Daugherty S.C."/>
            <person name="Madupu R."/>
            <person name="Angiuoli S.V."/>
            <person name="Durkin A.S."/>
            <person name="Haft D.H."/>
            <person name="Vamathevan J.J."/>
            <person name="Khouri H."/>
            <person name="Utterback T.R."/>
            <person name="Lee C."/>
            <person name="Dimitrov G."/>
            <person name="Jiang L."/>
            <person name="Qin H."/>
            <person name="Weidman J."/>
            <person name="Tran K."/>
            <person name="Kang K.H."/>
            <person name="Hance I.R."/>
            <person name="Nelson K.E."/>
            <person name="Fraser C.M."/>
        </authorList>
    </citation>
    <scope>NUCLEOTIDE SEQUENCE [LARGE SCALE GENOMIC DNA]</scope>
    <source>
        <strain>COL</strain>
    </source>
</reference>
<dbReference type="EC" id="3.4.21.-"/>
<dbReference type="EMBL" id="CP000046">
    <property type="protein sequence ID" value="AAW36880.1"/>
    <property type="molecule type" value="Genomic_DNA"/>
</dbReference>
<dbReference type="RefSeq" id="WP_001038759.1">
    <property type="nucleotide sequence ID" value="NZ_JBGOFO010000015.1"/>
</dbReference>
<dbReference type="SMR" id="Q5HEW4"/>
<dbReference type="MEROPS" id="S01.312"/>
<dbReference type="KEGG" id="sac:SACOL1865"/>
<dbReference type="HOGENOM" id="CLU_073589_2_0_9"/>
<dbReference type="Proteomes" id="UP000000530">
    <property type="component" value="Chromosome"/>
</dbReference>
<dbReference type="GO" id="GO:0005576">
    <property type="term" value="C:extracellular region"/>
    <property type="evidence" value="ECO:0007669"/>
    <property type="project" value="UniProtKB-SubCell"/>
</dbReference>
<dbReference type="GO" id="GO:0004252">
    <property type="term" value="F:serine-type endopeptidase activity"/>
    <property type="evidence" value="ECO:0007669"/>
    <property type="project" value="InterPro"/>
</dbReference>
<dbReference type="GO" id="GO:0006508">
    <property type="term" value="P:proteolysis"/>
    <property type="evidence" value="ECO:0007669"/>
    <property type="project" value="UniProtKB-KW"/>
</dbReference>
<dbReference type="Gene3D" id="2.40.10.10">
    <property type="entry name" value="Trypsin-like serine proteases"/>
    <property type="match status" value="2"/>
</dbReference>
<dbReference type="InterPro" id="IPR009003">
    <property type="entry name" value="Peptidase_S1_PA"/>
</dbReference>
<dbReference type="InterPro" id="IPR043504">
    <property type="entry name" value="Peptidase_S1_PA_chymotrypsin"/>
</dbReference>
<dbReference type="InterPro" id="IPR008256">
    <property type="entry name" value="Peptidase_S1B"/>
</dbReference>
<dbReference type="InterPro" id="IPR008353">
    <property type="entry name" value="Peptidase_S1B_tx"/>
</dbReference>
<dbReference type="InterPro" id="IPR001254">
    <property type="entry name" value="Trypsin_dom"/>
</dbReference>
<dbReference type="InterPro" id="IPR028301">
    <property type="entry name" value="V8_his_AS"/>
</dbReference>
<dbReference type="PANTHER" id="PTHR43019:SF23">
    <property type="entry name" value="PROTEASE DO-LIKE 5, CHLOROPLASTIC"/>
    <property type="match status" value="1"/>
</dbReference>
<dbReference type="PANTHER" id="PTHR43019">
    <property type="entry name" value="SERINE ENDOPROTEASE DEGS"/>
    <property type="match status" value="1"/>
</dbReference>
<dbReference type="Pfam" id="PF00089">
    <property type="entry name" value="Trypsin"/>
    <property type="match status" value="1"/>
</dbReference>
<dbReference type="PRINTS" id="PR01774">
    <property type="entry name" value="EXFOLTOXIN"/>
</dbReference>
<dbReference type="PRINTS" id="PR00839">
    <property type="entry name" value="V8PROTEASE"/>
</dbReference>
<dbReference type="SUPFAM" id="SSF50494">
    <property type="entry name" value="Trypsin-like serine proteases"/>
    <property type="match status" value="1"/>
</dbReference>
<dbReference type="PROSITE" id="PS00672">
    <property type="entry name" value="V8_HIS"/>
    <property type="match status" value="1"/>
</dbReference>
<gene>
    <name type="primary">splE</name>
    <name type="ordered locus">SACOL1865</name>
</gene>
<protein>
    <recommendedName>
        <fullName>Serine protease SplE</fullName>
        <ecNumber>3.4.21.-</ecNumber>
    </recommendedName>
</protein>
<comment type="subcellular location">
    <subcellularLocation>
        <location evidence="1">Secreted</location>
    </subcellularLocation>
</comment>
<comment type="similarity">
    <text evidence="3">Belongs to the peptidase S1B family.</text>
</comment>
<accession>Q5HEW4</accession>
<name>SPLE_STAAC</name>